<name>UPPP3_BACAN</name>
<accession>Q81V21</accession>
<accession>Q6I3A4</accession>
<accession>Q6KX21</accession>
<protein>
    <recommendedName>
        <fullName evidence="1">Undecaprenyl-diphosphatase 3</fullName>
        <ecNumber evidence="1">3.6.1.27</ecNumber>
    </recommendedName>
    <alternativeName>
        <fullName evidence="1">Bacitracin resistance protein 3</fullName>
    </alternativeName>
    <alternativeName>
        <fullName evidence="1">Undecaprenyl pyrophosphate phosphatase 3</fullName>
    </alternativeName>
</protein>
<reference key="1">
    <citation type="journal article" date="2003" name="Nature">
        <title>The genome sequence of Bacillus anthracis Ames and comparison to closely related bacteria.</title>
        <authorList>
            <person name="Read T.D."/>
            <person name="Peterson S.N."/>
            <person name="Tourasse N.J."/>
            <person name="Baillie L.W."/>
            <person name="Paulsen I.T."/>
            <person name="Nelson K.E."/>
            <person name="Tettelin H."/>
            <person name="Fouts D.E."/>
            <person name="Eisen J.A."/>
            <person name="Gill S.R."/>
            <person name="Holtzapple E.K."/>
            <person name="Okstad O.A."/>
            <person name="Helgason E."/>
            <person name="Rilstone J."/>
            <person name="Wu M."/>
            <person name="Kolonay J.F."/>
            <person name="Beanan M.J."/>
            <person name="Dodson R.J."/>
            <person name="Brinkac L.M."/>
            <person name="Gwinn M.L."/>
            <person name="DeBoy R.T."/>
            <person name="Madpu R."/>
            <person name="Daugherty S.C."/>
            <person name="Durkin A.S."/>
            <person name="Haft D.H."/>
            <person name="Nelson W.C."/>
            <person name="Peterson J.D."/>
            <person name="Pop M."/>
            <person name="Khouri H.M."/>
            <person name="Radune D."/>
            <person name="Benton J.L."/>
            <person name="Mahamoud Y."/>
            <person name="Jiang L."/>
            <person name="Hance I.R."/>
            <person name="Weidman J.F."/>
            <person name="Berry K.J."/>
            <person name="Plaut R.D."/>
            <person name="Wolf A.M."/>
            <person name="Watkins K.L."/>
            <person name="Nierman W.C."/>
            <person name="Hazen A."/>
            <person name="Cline R.T."/>
            <person name="Redmond C."/>
            <person name="Thwaite J.E."/>
            <person name="White O."/>
            <person name="Salzberg S.L."/>
            <person name="Thomason B."/>
            <person name="Friedlander A.M."/>
            <person name="Koehler T.M."/>
            <person name="Hanna P.C."/>
            <person name="Kolstoe A.-B."/>
            <person name="Fraser C.M."/>
        </authorList>
    </citation>
    <scope>NUCLEOTIDE SEQUENCE [LARGE SCALE GENOMIC DNA]</scope>
    <source>
        <strain>Ames / isolate Porton</strain>
    </source>
</reference>
<reference key="2">
    <citation type="journal article" date="2009" name="J. Bacteriol.">
        <title>The complete genome sequence of Bacillus anthracis Ames 'Ancestor'.</title>
        <authorList>
            <person name="Ravel J."/>
            <person name="Jiang L."/>
            <person name="Stanley S.T."/>
            <person name="Wilson M.R."/>
            <person name="Decker R.S."/>
            <person name="Read T.D."/>
            <person name="Worsham P."/>
            <person name="Keim P.S."/>
            <person name="Salzberg S.L."/>
            <person name="Fraser-Liggett C.M."/>
            <person name="Rasko D.A."/>
        </authorList>
    </citation>
    <scope>NUCLEOTIDE SEQUENCE [LARGE SCALE GENOMIC DNA]</scope>
    <source>
        <strain>Ames ancestor</strain>
    </source>
</reference>
<reference key="3">
    <citation type="submission" date="2004-01" db="EMBL/GenBank/DDBJ databases">
        <title>Complete genome sequence of Bacillus anthracis Sterne.</title>
        <authorList>
            <person name="Brettin T.S."/>
            <person name="Bruce D."/>
            <person name="Challacombe J.F."/>
            <person name="Gilna P."/>
            <person name="Han C."/>
            <person name="Hill K."/>
            <person name="Hitchcock P."/>
            <person name="Jackson P."/>
            <person name="Keim P."/>
            <person name="Longmire J."/>
            <person name="Lucas S."/>
            <person name="Okinaka R."/>
            <person name="Richardson P."/>
            <person name="Rubin E."/>
            <person name="Tice H."/>
        </authorList>
    </citation>
    <scope>NUCLEOTIDE SEQUENCE [LARGE SCALE GENOMIC DNA]</scope>
    <source>
        <strain>Sterne</strain>
    </source>
</reference>
<proteinExistence type="inferred from homology"/>
<comment type="function">
    <text evidence="1">Catalyzes the dephosphorylation of undecaprenyl diphosphate (UPP). Confers resistance to bacitracin.</text>
</comment>
<comment type="catalytic activity">
    <reaction evidence="1">
        <text>di-trans,octa-cis-undecaprenyl diphosphate + H2O = di-trans,octa-cis-undecaprenyl phosphate + phosphate + H(+)</text>
        <dbReference type="Rhea" id="RHEA:28094"/>
        <dbReference type="ChEBI" id="CHEBI:15377"/>
        <dbReference type="ChEBI" id="CHEBI:15378"/>
        <dbReference type="ChEBI" id="CHEBI:43474"/>
        <dbReference type="ChEBI" id="CHEBI:58405"/>
        <dbReference type="ChEBI" id="CHEBI:60392"/>
        <dbReference type="EC" id="3.6.1.27"/>
    </reaction>
</comment>
<comment type="subcellular location">
    <subcellularLocation>
        <location evidence="1">Cell membrane</location>
        <topology evidence="1">Multi-pass membrane protein</topology>
    </subcellularLocation>
</comment>
<comment type="miscellaneous">
    <text>Bacitracin is thought to be involved in the inhibition of peptidoglycan synthesis by sequestering undecaprenyl diphosphate, thereby reducing the pool of lipid carrier available.</text>
</comment>
<comment type="similarity">
    <text evidence="1">Belongs to the UppP family.</text>
</comment>
<organism>
    <name type="scientific">Bacillus anthracis</name>
    <dbReference type="NCBI Taxonomy" id="1392"/>
    <lineage>
        <taxon>Bacteria</taxon>
        <taxon>Bacillati</taxon>
        <taxon>Bacillota</taxon>
        <taxon>Bacilli</taxon>
        <taxon>Bacillales</taxon>
        <taxon>Bacillaceae</taxon>
        <taxon>Bacillus</taxon>
        <taxon>Bacillus cereus group</taxon>
    </lineage>
</organism>
<evidence type="ECO:0000255" key="1">
    <source>
        <dbReference type="HAMAP-Rule" id="MF_01006"/>
    </source>
</evidence>
<feature type="chain" id="PRO_0000151087" description="Undecaprenyl-diphosphatase 3">
    <location>
        <begin position="1"/>
        <end position="270"/>
    </location>
</feature>
<feature type="transmembrane region" description="Helical" evidence="1">
    <location>
        <begin position="5"/>
        <end position="25"/>
    </location>
</feature>
<feature type="transmembrane region" description="Helical" evidence="1">
    <location>
        <begin position="42"/>
        <end position="62"/>
    </location>
</feature>
<feature type="transmembrane region" description="Helical" evidence="1">
    <location>
        <begin position="89"/>
        <end position="109"/>
    </location>
</feature>
<feature type="transmembrane region" description="Helical" evidence="1">
    <location>
        <begin position="117"/>
        <end position="137"/>
    </location>
</feature>
<feature type="transmembrane region" description="Helical" evidence="1">
    <location>
        <begin position="192"/>
        <end position="212"/>
    </location>
</feature>
<feature type="transmembrane region" description="Helical" evidence="1">
    <location>
        <begin position="220"/>
        <end position="240"/>
    </location>
</feature>
<feature type="transmembrane region" description="Helical" evidence="1">
    <location>
        <begin position="250"/>
        <end position="270"/>
    </location>
</feature>
<sequence>MEQFYYILKYLILGLFQGLTEPIPISSSGHLVLAQHLLGLKIEGFSFELLVNSASLLAVLLIYRNDLIRLTKNGLSYIFTRAEDAKSDFFFIIYLVIATIPAGVIGVLFKDYIDQYLKGVKMVGISLLITAVGLWIIRNLRGRRNDGDLSMKDAIIVGLAQACALIPGISRSGATIVAAMLLGMKQETALRFSFLLYIPVSLGGLLLSITDIAKDPNLDTLFVPYIVAFIATFIMTYISLKWFMNIMAKGNLKYFSFYCIIVGVLTLIFL</sequence>
<dbReference type="EC" id="3.6.1.27" evidence="1"/>
<dbReference type="EMBL" id="AE016879">
    <property type="protein sequence ID" value="AAP24696.1"/>
    <property type="molecule type" value="Genomic_DNA"/>
</dbReference>
<dbReference type="EMBL" id="AE017334">
    <property type="protein sequence ID" value="AAT29787.1"/>
    <property type="molecule type" value="Genomic_DNA"/>
</dbReference>
<dbReference type="EMBL" id="AE017225">
    <property type="protein sequence ID" value="AAT52977.1"/>
    <property type="molecule type" value="Genomic_DNA"/>
</dbReference>
<dbReference type="RefSeq" id="NP_843210.1">
    <property type="nucleotide sequence ID" value="NC_003997.3"/>
</dbReference>
<dbReference type="RefSeq" id="WP_000434785.1">
    <property type="nucleotide sequence ID" value="NZ_WXXJ01000017.1"/>
</dbReference>
<dbReference type="RefSeq" id="YP_026926.1">
    <property type="nucleotide sequence ID" value="NC_005945.1"/>
</dbReference>
<dbReference type="SMR" id="Q81V21"/>
<dbReference type="STRING" id="261594.GBAA_0683"/>
<dbReference type="DNASU" id="1088072"/>
<dbReference type="GeneID" id="45020742"/>
<dbReference type="KEGG" id="ban:BA_0683"/>
<dbReference type="KEGG" id="banh:HYU01_03675"/>
<dbReference type="KEGG" id="bar:GBAA_0683"/>
<dbReference type="KEGG" id="bat:BAS0649"/>
<dbReference type="PATRIC" id="fig|198094.11.peg.682"/>
<dbReference type="eggNOG" id="COG1968">
    <property type="taxonomic scope" value="Bacteria"/>
</dbReference>
<dbReference type="HOGENOM" id="CLU_060296_1_2_9"/>
<dbReference type="OMA" id="FIIIENR"/>
<dbReference type="OrthoDB" id="9808289at2"/>
<dbReference type="Proteomes" id="UP000000427">
    <property type="component" value="Chromosome"/>
</dbReference>
<dbReference type="Proteomes" id="UP000000594">
    <property type="component" value="Chromosome"/>
</dbReference>
<dbReference type="GO" id="GO:0005886">
    <property type="term" value="C:plasma membrane"/>
    <property type="evidence" value="ECO:0007669"/>
    <property type="project" value="UniProtKB-SubCell"/>
</dbReference>
<dbReference type="GO" id="GO:0050380">
    <property type="term" value="F:undecaprenyl-diphosphatase activity"/>
    <property type="evidence" value="ECO:0007669"/>
    <property type="project" value="UniProtKB-UniRule"/>
</dbReference>
<dbReference type="GO" id="GO:0071555">
    <property type="term" value="P:cell wall organization"/>
    <property type="evidence" value="ECO:0007669"/>
    <property type="project" value="UniProtKB-KW"/>
</dbReference>
<dbReference type="GO" id="GO:0009252">
    <property type="term" value="P:peptidoglycan biosynthetic process"/>
    <property type="evidence" value="ECO:0007669"/>
    <property type="project" value="UniProtKB-KW"/>
</dbReference>
<dbReference type="GO" id="GO:0008360">
    <property type="term" value="P:regulation of cell shape"/>
    <property type="evidence" value="ECO:0007669"/>
    <property type="project" value="UniProtKB-KW"/>
</dbReference>
<dbReference type="GO" id="GO:0046677">
    <property type="term" value="P:response to antibiotic"/>
    <property type="evidence" value="ECO:0007669"/>
    <property type="project" value="UniProtKB-UniRule"/>
</dbReference>
<dbReference type="HAMAP" id="MF_01006">
    <property type="entry name" value="Undec_diphosphatase"/>
    <property type="match status" value="1"/>
</dbReference>
<dbReference type="InterPro" id="IPR003824">
    <property type="entry name" value="UppP"/>
</dbReference>
<dbReference type="PANTHER" id="PTHR30622">
    <property type="entry name" value="UNDECAPRENYL-DIPHOSPHATASE"/>
    <property type="match status" value="1"/>
</dbReference>
<dbReference type="PANTHER" id="PTHR30622:SF2">
    <property type="entry name" value="UNDECAPRENYL-DIPHOSPHATASE"/>
    <property type="match status" value="1"/>
</dbReference>
<dbReference type="Pfam" id="PF02673">
    <property type="entry name" value="BacA"/>
    <property type="match status" value="1"/>
</dbReference>
<keyword id="KW-0046">Antibiotic resistance</keyword>
<keyword id="KW-1003">Cell membrane</keyword>
<keyword id="KW-0133">Cell shape</keyword>
<keyword id="KW-0961">Cell wall biogenesis/degradation</keyword>
<keyword id="KW-0378">Hydrolase</keyword>
<keyword id="KW-0472">Membrane</keyword>
<keyword id="KW-0573">Peptidoglycan synthesis</keyword>
<keyword id="KW-1185">Reference proteome</keyword>
<keyword id="KW-0812">Transmembrane</keyword>
<keyword id="KW-1133">Transmembrane helix</keyword>
<gene>
    <name evidence="1" type="primary">uppP3</name>
    <name type="synonym">bacA-3</name>
    <name type="synonym">bacA3</name>
    <name type="synonym">upk3</name>
    <name type="ordered locus">BA_0683</name>
    <name type="ordered locus">GBAA_0683</name>
    <name type="ordered locus">BAS0649</name>
</gene>